<reference key="1">
    <citation type="journal article" date="1992" name="J. Bacteriol.">
        <title>Genes for tryptophan biosynthesis in the halophilic archaebacterium Haloferax volcanii: the trpDFEG cluster.</title>
        <authorList>
            <person name="Lam W.L."/>
            <person name="Logan S.M."/>
            <person name="Doolittle W.F."/>
        </authorList>
    </citation>
    <scope>NUCLEOTIDE SEQUENCE [GENOMIC DNA]</scope>
    <source>
        <strain>DS2 / DSM 5716 / WFD11</strain>
    </source>
</reference>
<reference key="2">
    <citation type="journal article" date="2010" name="PLoS ONE">
        <title>The complete genome sequence of Haloferax volcanii DS2, a model archaeon.</title>
        <authorList>
            <person name="Hartman A.L."/>
            <person name="Norais C."/>
            <person name="Badger J.H."/>
            <person name="Delmas S."/>
            <person name="Haldenby S."/>
            <person name="Madupu R."/>
            <person name="Robinson J."/>
            <person name="Khouri H."/>
            <person name="Ren Q."/>
            <person name="Lowe T.M."/>
            <person name="Maupin-Furlow J."/>
            <person name="Pohlschroder M."/>
            <person name="Daniels C."/>
            <person name="Pfeiffer F."/>
            <person name="Allers T."/>
            <person name="Eisen J.A."/>
        </authorList>
    </citation>
    <scope>NUCLEOTIDE SEQUENCE [LARGE SCALE GENOMIC DNA]</scope>
    <source>
        <strain>ATCC 29605 / DSM 3757 / JCM 8879 / NBRC 14742 / NCIMB 2012 / VKM B-1768 / DS2</strain>
    </source>
</reference>
<sequence>MTRVKVCGVTDETDLAAVDAAGADAVGAICDVPVDTPREIPRERARELFAAAPPFLTTTLVTMPDSVDHARDLAREVGPDVLQLHGDFAADDLDSLRATGVGVVPVVDATDLARARDLAPVVDAILVDTPSDSGAGGTGETHDWDASRDLVAAVDAPVILAGGLTPDNVVEAVRTVEPYGVDVASGVEASGGVKDHDAVRAFVAAAKTARGAVDDHEEVVA</sequence>
<name>TRPF_HALVD</name>
<accession>P52563</accession>
<accession>D4GT39</accession>
<feature type="chain" id="PRO_0000154401" description="N-(5'-phosphoribosyl)anthranilate isomerase">
    <location>
        <begin position="1"/>
        <end position="221"/>
    </location>
</feature>
<evidence type="ECO:0000305" key="1"/>
<dbReference type="EC" id="5.3.1.24"/>
<dbReference type="EMBL" id="M83788">
    <property type="protein sequence ID" value="AAA73176.1"/>
    <property type="molecule type" value="Genomic_DNA"/>
</dbReference>
<dbReference type="EMBL" id="CP001956">
    <property type="protein sequence ID" value="ADE04719.1"/>
    <property type="molecule type" value="Genomic_DNA"/>
</dbReference>
<dbReference type="RefSeq" id="WP_004042369.1">
    <property type="nucleotide sequence ID" value="NC_013967.1"/>
</dbReference>
<dbReference type="SMR" id="P52563"/>
<dbReference type="STRING" id="309800.HVO_2455"/>
<dbReference type="PaxDb" id="309800-C498_07575"/>
<dbReference type="EnsemblBacteria" id="ADE04719">
    <property type="protein sequence ID" value="ADE04719"/>
    <property type="gene ID" value="HVO_2455"/>
</dbReference>
<dbReference type="GeneID" id="8924041"/>
<dbReference type="KEGG" id="hvo:HVO_2455"/>
<dbReference type="eggNOG" id="arCOG01983">
    <property type="taxonomic scope" value="Archaea"/>
</dbReference>
<dbReference type="HOGENOM" id="CLU_076364_2_1_2"/>
<dbReference type="OrthoDB" id="27513at2157"/>
<dbReference type="UniPathway" id="UPA00035">
    <property type="reaction ID" value="UER00042"/>
</dbReference>
<dbReference type="Proteomes" id="UP000008243">
    <property type="component" value="Chromosome"/>
</dbReference>
<dbReference type="GO" id="GO:0004640">
    <property type="term" value="F:phosphoribosylanthranilate isomerase activity"/>
    <property type="evidence" value="ECO:0007669"/>
    <property type="project" value="UniProtKB-UniRule"/>
</dbReference>
<dbReference type="GO" id="GO:0000162">
    <property type="term" value="P:L-tryptophan biosynthetic process"/>
    <property type="evidence" value="ECO:0007669"/>
    <property type="project" value="UniProtKB-UniRule"/>
</dbReference>
<dbReference type="CDD" id="cd00405">
    <property type="entry name" value="PRAI"/>
    <property type="match status" value="1"/>
</dbReference>
<dbReference type="Gene3D" id="3.20.20.70">
    <property type="entry name" value="Aldolase class I"/>
    <property type="match status" value="1"/>
</dbReference>
<dbReference type="HAMAP" id="MF_00135">
    <property type="entry name" value="PRAI"/>
    <property type="match status" value="1"/>
</dbReference>
<dbReference type="InterPro" id="IPR013785">
    <property type="entry name" value="Aldolase_TIM"/>
</dbReference>
<dbReference type="InterPro" id="IPR001240">
    <property type="entry name" value="PRAI_dom"/>
</dbReference>
<dbReference type="InterPro" id="IPR011060">
    <property type="entry name" value="RibuloseP-bd_barrel"/>
</dbReference>
<dbReference type="InterPro" id="IPR044643">
    <property type="entry name" value="TrpF_fam"/>
</dbReference>
<dbReference type="PANTHER" id="PTHR42894">
    <property type="entry name" value="N-(5'-PHOSPHORIBOSYL)ANTHRANILATE ISOMERASE"/>
    <property type="match status" value="1"/>
</dbReference>
<dbReference type="PANTHER" id="PTHR42894:SF1">
    <property type="entry name" value="N-(5'-PHOSPHORIBOSYL)ANTHRANILATE ISOMERASE"/>
    <property type="match status" value="1"/>
</dbReference>
<dbReference type="Pfam" id="PF00697">
    <property type="entry name" value="PRAI"/>
    <property type="match status" value="1"/>
</dbReference>
<dbReference type="SUPFAM" id="SSF51366">
    <property type="entry name" value="Ribulose-phoshate binding barrel"/>
    <property type="match status" value="1"/>
</dbReference>
<protein>
    <recommendedName>
        <fullName>N-(5'-phosphoribosyl)anthranilate isomerase</fullName>
        <shortName>PRAI</shortName>
        <ecNumber>5.3.1.24</ecNumber>
    </recommendedName>
</protein>
<proteinExistence type="inferred from homology"/>
<comment type="catalytic activity">
    <reaction>
        <text>N-(5-phospho-beta-D-ribosyl)anthranilate = 1-(2-carboxyphenylamino)-1-deoxy-D-ribulose 5-phosphate</text>
        <dbReference type="Rhea" id="RHEA:21540"/>
        <dbReference type="ChEBI" id="CHEBI:18277"/>
        <dbReference type="ChEBI" id="CHEBI:58613"/>
        <dbReference type="EC" id="5.3.1.24"/>
    </reaction>
</comment>
<comment type="pathway">
    <text>Amino-acid biosynthesis; L-tryptophan biosynthesis; L-tryptophan from chorismate: step 3/5.</text>
</comment>
<comment type="similarity">
    <text evidence="1">Belongs to the TrpF family.</text>
</comment>
<gene>
    <name type="primary">trpF</name>
    <name type="ordered locus">HVO_2455</name>
</gene>
<organism>
    <name type="scientific">Haloferax volcanii (strain ATCC 29605 / DSM 3757 / JCM 8879 / NBRC 14742 / NCIMB 2012 / VKM B-1768 / DS2)</name>
    <name type="common">Halobacterium volcanii</name>
    <dbReference type="NCBI Taxonomy" id="309800"/>
    <lineage>
        <taxon>Archaea</taxon>
        <taxon>Methanobacteriati</taxon>
        <taxon>Methanobacteriota</taxon>
        <taxon>Stenosarchaea group</taxon>
        <taxon>Halobacteria</taxon>
        <taxon>Halobacteriales</taxon>
        <taxon>Haloferacaceae</taxon>
        <taxon>Haloferax</taxon>
    </lineage>
</organism>
<keyword id="KW-0028">Amino-acid biosynthesis</keyword>
<keyword id="KW-0057">Aromatic amino acid biosynthesis</keyword>
<keyword id="KW-0413">Isomerase</keyword>
<keyword id="KW-1185">Reference proteome</keyword>
<keyword id="KW-0822">Tryptophan biosynthesis</keyword>